<accession>P0C8K0</accession>
<accession>P42903</accession>
<accession>Q2M977</accession>
<sequence>MKHLTEMVRQHKAGKTNGIYAVCSAHPLVLEAAIRYASANQTPLLIEATSNQVDQFGGYTGMTPADFRGFVCQLADSLNFPQDALILGGDHLGPNRWQNLPAAQAMANADDLIKSYVAAGFKKIHLDCSMSCQDDPIPLTDDIVAERAARLAKVAEETCLEHFGEADLEYVIGTEVPVPGGAHETLSELAVTTPDAARATLEAHRHAFEKQGLNAIWPRIIALVVQPGVEFDHTNVIDYQPAKASALSQMVENYETLIFEAHSTDYQTPQSLRQLVIDHFAILKVGPALTFALREALFSLAAIEEELVPAKACSGLRQVLEDVMLDRPEYWQSHYHGDGNARRLARGYSYSDRVRYYWPDSQIDDAFAHLVRNLADSPIPLPLISQYLPLQYVKVRSGELQPTPRELIINHIQDILAQYHTACEGQ</sequence>
<evidence type="ECO:0000269" key="1">
    <source>
    </source>
</evidence>
<evidence type="ECO:0000305" key="2"/>
<evidence type="ECO:0000305" key="3">
    <source>
    </source>
</evidence>
<dbReference type="EMBL" id="U18997">
    <property type="protein sequence ID" value="AAA57935.1"/>
    <property type="molecule type" value="Genomic_DNA"/>
</dbReference>
<dbReference type="EMBL" id="U00096">
    <property type="protein sequence ID" value="AAC76166.1"/>
    <property type="molecule type" value="Genomic_DNA"/>
</dbReference>
<dbReference type="EMBL" id="AP009048">
    <property type="protein sequence ID" value="BAE77179.1"/>
    <property type="molecule type" value="Genomic_DNA"/>
</dbReference>
<dbReference type="PIR" id="H65102">
    <property type="entry name" value="H65102"/>
</dbReference>
<dbReference type="RefSeq" id="NP_417601.1">
    <property type="nucleotide sequence ID" value="NC_000913.3"/>
</dbReference>
<dbReference type="RefSeq" id="WP_000681920.1">
    <property type="nucleotide sequence ID" value="NZ_LN832404.1"/>
</dbReference>
<dbReference type="SMR" id="P0C8K0"/>
<dbReference type="BioGRID" id="4263374">
    <property type="interactions" value="16"/>
</dbReference>
<dbReference type="ComplexPortal" id="CPX-6022">
    <property type="entry name" value="KbaYZ tagatose-1,6-bisphosphate aldolase complex"/>
</dbReference>
<dbReference type="DIP" id="DIP-9075N"/>
<dbReference type="FunCoup" id="P0C8K0">
    <property type="interactions" value="51"/>
</dbReference>
<dbReference type="IntAct" id="P0C8K0">
    <property type="interactions" value="7"/>
</dbReference>
<dbReference type="STRING" id="511145.b3132"/>
<dbReference type="jPOST" id="P0C8K0"/>
<dbReference type="PaxDb" id="511145-b3132"/>
<dbReference type="DNASU" id="947637"/>
<dbReference type="EnsemblBacteria" id="AAC76166">
    <property type="protein sequence ID" value="AAC76166"/>
    <property type="gene ID" value="b3132"/>
</dbReference>
<dbReference type="GeneID" id="947637"/>
<dbReference type="KEGG" id="ecj:JW3101"/>
<dbReference type="KEGG" id="eco:b3132"/>
<dbReference type="KEGG" id="ecoc:C3026_17070"/>
<dbReference type="PATRIC" id="fig|1411691.4.peg.3599"/>
<dbReference type="EchoBASE" id="EB2616"/>
<dbReference type="eggNOG" id="COG4573">
    <property type="taxonomic scope" value="Bacteria"/>
</dbReference>
<dbReference type="HOGENOM" id="CLU_053334_0_0_6"/>
<dbReference type="InParanoid" id="P0C8K0"/>
<dbReference type="OMA" id="QRHFSYS"/>
<dbReference type="OrthoDB" id="1672942at2"/>
<dbReference type="PhylomeDB" id="P0C8K0"/>
<dbReference type="BioCyc" id="EcoCyc:G7631-MONOMER"/>
<dbReference type="BioCyc" id="MetaCyc:G7631-MONOMER"/>
<dbReference type="SABIO-RK" id="P0C8K0"/>
<dbReference type="UniPathway" id="UPA00704">
    <property type="reaction ID" value="UER00716"/>
</dbReference>
<dbReference type="PRO" id="PR:P0C8K0"/>
<dbReference type="Proteomes" id="UP000000625">
    <property type="component" value="Chromosome"/>
</dbReference>
<dbReference type="GO" id="GO:1902494">
    <property type="term" value="C:catalytic complex"/>
    <property type="evidence" value="ECO:0000303"/>
    <property type="project" value="ComplexPortal"/>
</dbReference>
<dbReference type="GO" id="GO:0005886">
    <property type="term" value="C:plasma membrane"/>
    <property type="evidence" value="ECO:0000318"/>
    <property type="project" value="GO_Central"/>
</dbReference>
<dbReference type="GO" id="GO:0008047">
    <property type="term" value="F:enzyme activator activity"/>
    <property type="evidence" value="ECO:0000315"/>
    <property type="project" value="EcoCyc"/>
</dbReference>
<dbReference type="GO" id="GO:0005975">
    <property type="term" value="P:carbohydrate metabolic process"/>
    <property type="evidence" value="ECO:0007669"/>
    <property type="project" value="InterPro"/>
</dbReference>
<dbReference type="GO" id="GO:2001059">
    <property type="term" value="P:D-tagatose 6-phosphate catabolic process"/>
    <property type="evidence" value="ECO:0000303"/>
    <property type="project" value="ComplexPortal"/>
</dbReference>
<dbReference type="GO" id="GO:0009401">
    <property type="term" value="P:phosphoenolpyruvate-dependent sugar phosphotransferase system"/>
    <property type="evidence" value="ECO:0000318"/>
    <property type="project" value="GO_Central"/>
</dbReference>
<dbReference type="Gene3D" id="3.20.20.70">
    <property type="entry name" value="Aldolase class I"/>
    <property type="match status" value="1"/>
</dbReference>
<dbReference type="Gene3D" id="1.10.400.20">
    <property type="entry name" value="putative tagatose 6-phosphate kinase domain like"/>
    <property type="match status" value="1"/>
</dbReference>
<dbReference type="HAMAP" id="MF_01295">
    <property type="entry name" value="Tagatose_aldol_KbaZ"/>
    <property type="match status" value="1"/>
</dbReference>
<dbReference type="InterPro" id="IPR013785">
    <property type="entry name" value="Aldolase_TIM"/>
</dbReference>
<dbReference type="InterPro" id="IPR012062">
    <property type="entry name" value="GatZ/KbaZ-like"/>
</dbReference>
<dbReference type="InterPro" id="IPR050303">
    <property type="entry name" value="GatZ_KbaZ_carbometab"/>
</dbReference>
<dbReference type="InterPro" id="IPR023435">
    <property type="entry name" value="TagBP_ald_KbaZ"/>
</dbReference>
<dbReference type="NCBIfam" id="TIGR02810">
    <property type="entry name" value="agaZ_gatZ"/>
    <property type="match status" value="1"/>
</dbReference>
<dbReference type="NCBIfam" id="NF012002">
    <property type="entry name" value="PRK15458.1"/>
    <property type="match status" value="1"/>
</dbReference>
<dbReference type="PANTHER" id="PTHR32502:SF2">
    <property type="entry name" value="D-TAGATOSE-1,6-BISPHOSPHATE ALDOLASE SUBUNIT KBAZ"/>
    <property type="match status" value="1"/>
</dbReference>
<dbReference type="PANTHER" id="PTHR32502">
    <property type="entry name" value="N-ACETYLGALACTOSAMINE PERMEASE II COMPONENT-RELATED"/>
    <property type="match status" value="1"/>
</dbReference>
<dbReference type="Pfam" id="PF08013">
    <property type="entry name" value="GatZ_KbaZ-like"/>
    <property type="match status" value="1"/>
</dbReference>
<dbReference type="PIRSF" id="PIRSF009264">
    <property type="entry name" value="TagBP_ald_AgaZ"/>
    <property type="match status" value="1"/>
</dbReference>
<dbReference type="SUPFAM" id="SSF51569">
    <property type="entry name" value="Aldolase"/>
    <property type="match status" value="1"/>
</dbReference>
<proteinExistence type="evidence at protein level"/>
<gene>
    <name type="primary">kbaZ</name>
    <name type="synonym">agaZ</name>
    <name type="synonym">yhaX</name>
    <name type="ordered locus">b3132</name>
    <name type="ordered locus">JW3101</name>
</gene>
<protein>
    <recommendedName>
        <fullName>D-tagatose-1,6-bisphosphate aldolase subunit KbaZ</fullName>
    </recommendedName>
</protein>
<reference key="1">
    <citation type="journal article" date="1997" name="Science">
        <title>The complete genome sequence of Escherichia coli K-12.</title>
        <authorList>
            <person name="Blattner F.R."/>
            <person name="Plunkett G. III"/>
            <person name="Bloch C.A."/>
            <person name="Perna N.T."/>
            <person name="Burland V."/>
            <person name="Riley M."/>
            <person name="Collado-Vides J."/>
            <person name="Glasner J.D."/>
            <person name="Rode C.K."/>
            <person name="Mayhew G.F."/>
            <person name="Gregor J."/>
            <person name="Davis N.W."/>
            <person name="Kirkpatrick H.A."/>
            <person name="Goeden M.A."/>
            <person name="Rose D.J."/>
            <person name="Mau B."/>
            <person name="Shao Y."/>
        </authorList>
    </citation>
    <scope>NUCLEOTIDE SEQUENCE [LARGE SCALE GENOMIC DNA]</scope>
    <source>
        <strain>K12 / MG1655 / ATCC 47076</strain>
    </source>
</reference>
<reference key="2">
    <citation type="journal article" date="2006" name="Mol. Syst. Biol.">
        <title>Highly accurate genome sequences of Escherichia coli K-12 strains MG1655 and W3110.</title>
        <authorList>
            <person name="Hayashi K."/>
            <person name="Morooka N."/>
            <person name="Yamamoto Y."/>
            <person name="Fujita K."/>
            <person name="Isono K."/>
            <person name="Choi S."/>
            <person name="Ohtsubo E."/>
            <person name="Baba T."/>
            <person name="Wanner B.L."/>
            <person name="Mori H."/>
            <person name="Horiuchi T."/>
        </authorList>
    </citation>
    <scope>NUCLEOTIDE SEQUENCE [LARGE SCALE GENOMIC DNA]</scope>
    <source>
        <strain>K12 / W3110 / ATCC 27325 / DSM 5911</strain>
    </source>
</reference>
<reference key="3">
    <citation type="journal article" date="1996" name="Microbiology">
        <title>Novel phosphotransferase genes revealed by bacterial genome sequencing: a gene cluster encoding a putative N-acetylgalactosamine metabolic pathway in Escherichia coli.</title>
        <authorList>
            <person name="Reizer J."/>
            <person name="Ramseier T.M."/>
            <person name="Reizer A."/>
            <person name="Charbit A."/>
            <person name="Saier M.H. Jr."/>
        </authorList>
    </citation>
    <scope>DISCUSSION OF SEQUENCE</scope>
</reference>
<reference key="4">
    <citation type="journal article" date="2002" name="Arch. Microbiol.">
        <title>Two class II D-tagatose-bisphosphate aldolases from enteric bacteria.</title>
        <authorList>
            <person name="Brinkkoetter A."/>
            <person name="Shakeri-Garakani A."/>
            <person name="Lengeler J.W."/>
        </authorList>
    </citation>
    <scope>FUNCTION AS A TAGBP ALDOLASE COMPONENT</scope>
    <scope>COMPLEX WITH KBAY</scope>
</reference>
<name>KBAZ_ECOLI</name>
<comment type="function">
    <text evidence="1">Component of the tagatose-1,6-bisphosphate aldolase KbaYZ that is required for full activity and stability of the Y subunit. Could have a chaperone-like function for the proper and stable folding of KbaY. When expressed alone, KbaZ does not show any aldolase activity.</text>
</comment>
<comment type="pathway">
    <text>Carbohydrate metabolism; D-tagatose 6-phosphate degradation; D-glyceraldehyde 3-phosphate and glycerone phosphate from D-tagatose 6-phosphate: step 2/2.</text>
</comment>
<comment type="subunit">
    <text>Forms a complex with KbaY.</text>
</comment>
<comment type="miscellaneous">
    <text>In contrast to E.coli strains C and EC3132, K-12 strains cannot grow on N-acetylgalactosamine and D-galactosamine, because they carry a deletion and thus lack active PTS systems specific for these compounds. Therefore, KbaYZ in K-12 strains is not involved in the degradation of these compounds.</text>
</comment>
<comment type="similarity">
    <text evidence="2">Belongs to the GatZ/KbaZ family. KbaZ subfamily.</text>
</comment>
<comment type="caution">
    <text evidence="3">Was originally thought to be a tagatose 6-phosphate kinase.</text>
</comment>
<feature type="chain" id="PRO_0000064493" description="D-tagatose-1,6-bisphosphate aldolase subunit KbaZ">
    <location>
        <begin position="1"/>
        <end position="426"/>
    </location>
</feature>
<keyword id="KW-1185">Reference proteome</keyword>
<organism>
    <name type="scientific">Escherichia coli (strain K12)</name>
    <dbReference type="NCBI Taxonomy" id="83333"/>
    <lineage>
        <taxon>Bacteria</taxon>
        <taxon>Pseudomonadati</taxon>
        <taxon>Pseudomonadota</taxon>
        <taxon>Gammaproteobacteria</taxon>
        <taxon>Enterobacterales</taxon>
        <taxon>Enterobacteriaceae</taxon>
        <taxon>Escherichia</taxon>
    </lineage>
</organism>